<comment type="subcellular location">
    <subcellularLocation>
        <location evidence="3">Membrane</location>
        <topology evidence="3">Multi-pass membrane protein</topology>
    </subcellularLocation>
</comment>
<comment type="disruption phenotype">
    <text evidence="2">Increases sensitivity to copper.</text>
</comment>
<accession>P47034</accession>
<accession>D6VWA7</accession>
<name>ICS3_YEAST</name>
<feature type="chain" id="PRO_0000203052" description="Increased copper sensitivity protein 3">
    <location>
        <begin position="1"/>
        <end position="131"/>
    </location>
</feature>
<feature type="transmembrane region" description="Helical" evidence="1">
    <location>
        <begin position="35"/>
        <end position="55"/>
    </location>
</feature>
<feature type="transmembrane region" description="Helical" evidence="1">
    <location>
        <begin position="74"/>
        <end position="94"/>
    </location>
</feature>
<dbReference type="EMBL" id="Z49352">
    <property type="protein sequence ID" value="CAA89369.1"/>
    <property type="molecule type" value="Genomic_DNA"/>
</dbReference>
<dbReference type="EMBL" id="AY692701">
    <property type="protein sequence ID" value="AAT92720.1"/>
    <property type="molecule type" value="Genomic_DNA"/>
</dbReference>
<dbReference type="EMBL" id="BK006943">
    <property type="protein sequence ID" value="DAA08723.1"/>
    <property type="molecule type" value="Genomic_DNA"/>
</dbReference>
<dbReference type="PIR" id="S56853">
    <property type="entry name" value="S56853"/>
</dbReference>
<dbReference type="RefSeq" id="NP_012458.1">
    <property type="nucleotide sequence ID" value="NM_001181510.1"/>
</dbReference>
<dbReference type="BioGRID" id="33679">
    <property type="interactions" value="24"/>
</dbReference>
<dbReference type="FunCoup" id="P47034">
    <property type="interactions" value="36"/>
</dbReference>
<dbReference type="STRING" id="4932.YJL077C"/>
<dbReference type="iPTMnet" id="P47034"/>
<dbReference type="PaxDb" id="4932-YJL077C"/>
<dbReference type="EnsemblFungi" id="YJL077C_mRNA">
    <property type="protein sequence ID" value="YJL077C"/>
    <property type="gene ID" value="YJL077C"/>
</dbReference>
<dbReference type="GeneID" id="853368"/>
<dbReference type="KEGG" id="sce:YJL077C"/>
<dbReference type="AGR" id="SGD:S000003613"/>
<dbReference type="SGD" id="S000003613">
    <property type="gene designation" value="ICS3"/>
</dbReference>
<dbReference type="VEuPathDB" id="FungiDB:YJL077C"/>
<dbReference type="HOGENOM" id="CLU_1928785_0_0_1"/>
<dbReference type="InParanoid" id="P47034"/>
<dbReference type="BioCyc" id="YEAST:G3O-31534-MONOMER"/>
<dbReference type="BioGRID-ORCS" id="853368">
    <property type="hits" value="0 hits in 10 CRISPR screens"/>
</dbReference>
<dbReference type="PRO" id="PR:P47034"/>
<dbReference type="Proteomes" id="UP000002311">
    <property type="component" value="Chromosome X"/>
</dbReference>
<dbReference type="RNAct" id="P47034">
    <property type="molecule type" value="protein"/>
</dbReference>
<dbReference type="GO" id="GO:0016020">
    <property type="term" value="C:membrane"/>
    <property type="evidence" value="ECO:0007669"/>
    <property type="project" value="UniProtKB-SubCell"/>
</dbReference>
<dbReference type="GO" id="GO:0055070">
    <property type="term" value="P:copper ion homeostasis"/>
    <property type="evidence" value="ECO:0000315"/>
    <property type="project" value="SGD"/>
</dbReference>
<reference key="1">
    <citation type="journal article" date="1996" name="EMBO J.">
        <title>Complete nucleotide sequence of Saccharomyces cerevisiae chromosome X.</title>
        <authorList>
            <person name="Galibert F."/>
            <person name="Alexandraki D."/>
            <person name="Baur A."/>
            <person name="Boles E."/>
            <person name="Chalwatzis N."/>
            <person name="Chuat J.-C."/>
            <person name="Coster F."/>
            <person name="Cziepluch C."/>
            <person name="de Haan M."/>
            <person name="Domdey H."/>
            <person name="Durand P."/>
            <person name="Entian K.-D."/>
            <person name="Gatius M."/>
            <person name="Goffeau A."/>
            <person name="Grivell L.A."/>
            <person name="Hennemann A."/>
            <person name="Herbert C.J."/>
            <person name="Heumann K."/>
            <person name="Hilger F."/>
            <person name="Hollenberg C.P."/>
            <person name="Huang M.-E."/>
            <person name="Jacq C."/>
            <person name="Jauniaux J.-C."/>
            <person name="Katsoulou C."/>
            <person name="Kirchrath L."/>
            <person name="Kleine K."/>
            <person name="Kordes E."/>
            <person name="Koetter P."/>
            <person name="Liebl S."/>
            <person name="Louis E.J."/>
            <person name="Manus V."/>
            <person name="Mewes H.-W."/>
            <person name="Miosga T."/>
            <person name="Obermaier B."/>
            <person name="Perea J."/>
            <person name="Pohl T.M."/>
            <person name="Portetelle D."/>
            <person name="Pujol A."/>
            <person name="Purnelle B."/>
            <person name="Ramezani Rad M."/>
            <person name="Rasmussen S.W."/>
            <person name="Rose M."/>
            <person name="Rossau R."/>
            <person name="Schaaff-Gerstenschlaeger I."/>
            <person name="Smits P.H.M."/>
            <person name="Scarcez T."/>
            <person name="Soriano N."/>
            <person name="To Van D."/>
            <person name="Tzermia M."/>
            <person name="Van Broekhoven A."/>
            <person name="Vandenbol M."/>
            <person name="Wedler H."/>
            <person name="von Wettstein D."/>
            <person name="Wambutt R."/>
            <person name="Zagulski M."/>
            <person name="Zollner A."/>
            <person name="Karpfinger-Hartl L."/>
        </authorList>
    </citation>
    <scope>NUCLEOTIDE SEQUENCE [LARGE SCALE GENOMIC DNA]</scope>
    <source>
        <strain>ATCC 204508 / S288c</strain>
    </source>
</reference>
<reference key="2">
    <citation type="journal article" date="2014" name="G3 (Bethesda)">
        <title>The reference genome sequence of Saccharomyces cerevisiae: Then and now.</title>
        <authorList>
            <person name="Engel S.R."/>
            <person name="Dietrich F.S."/>
            <person name="Fisk D.G."/>
            <person name="Binkley G."/>
            <person name="Balakrishnan R."/>
            <person name="Costanzo M.C."/>
            <person name="Dwight S.S."/>
            <person name="Hitz B.C."/>
            <person name="Karra K."/>
            <person name="Nash R.S."/>
            <person name="Weng S."/>
            <person name="Wong E.D."/>
            <person name="Lloyd P."/>
            <person name="Skrzypek M.S."/>
            <person name="Miyasato S.R."/>
            <person name="Simison M."/>
            <person name="Cherry J.M."/>
        </authorList>
    </citation>
    <scope>GENOME REANNOTATION</scope>
    <source>
        <strain>ATCC 204508 / S288c</strain>
    </source>
</reference>
<reference key="3">
    <citation type="journal article" date="2007" name="Genome Res.">
        <title>Approaching a complete repository of sequence-verified protein-encoding clones for Saccharomyces cerevisiae.</title>
        <authorList>
            <person name="Hu Y."/>
            <person name="Rolfs A."/>
            <person name="Bhullar B."/>
            <person name="Murthy T.V.S."/>
            <person name="Zhu C."/>
            <person name="Berger M.F."/>
            <person name="Camargo A.A."/>
            <person name="Kelley F."/>
            <person name="McCarron S."/>
            <person name="Jepson D."/>
            <person name="Richardson A."/>
            <person name="Raphael J."/>
            <person name="Moreira D."/>
            <person name="Taycher E."/>
            <person name="Zuo D."/>
            <person name="Mohr S."/>
            <person name="Kane M.F."/>
            <person name="Williamson J."/>
            <person name="Simpson A.J.G."/>
            <person name="Bulyk M.L."/>
            <person name="Harlow E."/>
            <person name="Marsischky G."/>
            <person name="Kolodner R.D."/>
            <person name="LaBaer J."/>
        </authorList>
    </citation>
    <scope>NUCLEOTIDE SEQUENCE [GENOMIC DNA]</scope>
    <source>
        <strain>ATCC 204508 / S288c</strain>
    </source>
</reference>
<reference key="4">
    <citation type="journal article" date="1999" name="Mol. Gen. Genet.">
        <title>Functional analysis of 150 deletion mutants in Saccharomyces cerevisiae by a systematic approach.</title>
        <authorList>
            <person name="Entian K.-D."/>
            <person name="Schuster T."/>
            <person name="Hegemann J.H."/>
            <person name="Becher D."/>
            <person name="Feldmann H."/>
            <person name="Gueldener U."/>
            <person name="Goetz R."/>
            <person name="Hansen M."/>
            <person name="Hollenberg C.P."/>
            <person name="Jansen G."/>
            <person name="Kramer W."/>
            <person name="Klein S."/>
            <person name="Koetter P."/>
            <person name="Kricke J."/>
            <person name="Launhardt H."/>
            <person name="Mannhaupt G."/>
            <person name="Maierl A."/>
            <person name="Meyer P."/>
            <person name="Mewes W."/>
            <person name="Munder T."/>
            <person name="Niedenthal R.K."/>
            <person name="Ramezani Rad M."/>
            <person name="Roehmer A."/>
            <person name="Roemer A."/>
            <person name="Rose M."/>
            <person name="Schaefer B."/>
            <person name="Siegler M.-L."/>
            <person name="Vetter J."/>
            <person name="Wilhelm N."/>
            <person name="Wolf K."/>
            <person name="Zimmermann F.K."/>
            <person name="Zollner A."/>
            <person name="Hinnen A."/>
        </authorList>
    </citation>
    <scope>DISRUPTION PHENOTYPE</scope>
</reference>
<gene>
    <name type="primary">ICS3</name>
    <name type="ordered locus">YJL077C</name>
    <name type="ORF">J1033</name>
</gene>
<protein>
    <recommendedName>
        <fullName>Increased copper sensitivity protein 3</fullName>
    </recommendedName>
</protein>
<evidence type="ECO:0000255" key="1"/>
<evidence type="ECO:0000269" key="2">
    <source>
    </source>
</evidence>
<evidence type="ECO:0000305" key="3"/>
<sequence>MHISLPTRNKSYFRIRTRTYQIGLYHSDSSPIRDISVLHLLIATLCTIFFPIFFSLSKVQVVQWQGTTISKNCIALTMSFPLNAIPGMYLIIAFPRLQTVIPLQRNTPVRITKSVIVKGAVSVPRISSPMH</sequence>
<keyword id="KW-0472">Membrane</keyword>
<keyword id="KW-1185">Reference proteome</keyword>
<keyword id="KW-0812">Transmembrane</keyword>
<keyword id="KW-1133">Transmembrane helix</keyword>
<organism>
    <name type="scientific">Saccharomyces cerevisiae (strain ATCC 204508 / S288c)</name>
    <name type="common">Baker's yeast</name>
    <dbReference type="NCBI Taxonomy" id="559292"/>
    <lineage>
        <taxon>Eukaryota</taxon>
        <taxon>Fungi</taxon>
        <taxon>Dikarya</taxon>
        <taxon>Ascomycota</taxon>
        <taxon>Saccharomycotina</taxon>
        <taxon>Saccharomycetes</taxon>
        <taxon>Saccharomycetales</taxon>
        <taxon>Saccharomycetaceae</taxon>
        <taxon>Saccharomyces</taxon>
    </lineage>
</organism>
<proteinExistence type="predicted"/>